<dbReference type="EC" id="1.14.19.65" evidence="3"/>
<dbReference type="EMBL" id="AB434654">
    <property type="protein sequence ID" value="BAG75113.1"/>
    <property type="molecule type" value="mRNA"/>
</dbReference>
<dbReference type="SMR" id="B5UAQ8"/>
<dbReference type="BioCyc" id="MetaCyc:MONOMER-12340"/>
<dbReference type="BRENDA" id="1.14.19.65">
    <property type="organism ID" value="2173"/>
</dbReference>
<dbReference type="BRENDA" id="1.14.21.2">
    <property type="organism ID" value="2173"/>
</dbReference>
<dbReference type="GO" id="GO:0005789">
    <property type="term" value="C:endoplasmic reticulum membrane"/>
    <property type="evidence" value="ECO:0007669"/>
    <property type="project" value="UniProtKB-SubCell"/>
</dbReference>
<dbReference type="GO" id="GO:0047053">
    <property type="term" value="F:(S)-cheilanthifoline synthase activity"/>
    <property type="evidence" value="ECO:0000314"/>
    <property type="project" value="UniProtKB"/>
</dbReference>
<dbReference type="GO" id="GO:0020037">
    <property type="term" value="F:heme binding"/>
    <property type="evidence" value="ECO:0007669"/>
    <property type="project" value="InterPro"/>
</dbReference>
<dbReference type="GO" id="GO:0005506">
    <property type="term" value="F:iron ion binding"/>
    <property type="evidence" value="ECO:0007669"/>
    <property type="project" value="InterPro"/>
</dbReference>
<dbReference type="GO" id="GO:0004497">
    <property type="term" value="F:monooxygenase activity"/>
    <property type="evidence" value="ECO:0007669"/>
    <property type="project" value="UniProtKB-KW"/>
</dbReference>
<dbReference type="GO" id="GO:0033075">
    <property type="term" value="P:isoquinoline alkaloid biosynthetic process"/>
    <property type="evidence" value="ECO:0000314"/>
    <property type="project" value="UniProtKB"/>
</dbReference>
<dbReference type="FunFam" id="1.10.630.10:FF:000147">
    <property type="entry name" value="(S)-stylopine synthase 1"/>
    <property type="match status" value="1"/>
</dbReference>
<dbReference type="Gene3D" id="1.10.630.10">
    <property type="entry name" value="Cytochrome P450"/>
    <property type="match status" value="1"/>
</dbReference>
<dbReference type="InterPro" id="IPR001128">
    <property type="entry name" value="Cyt_P450"/>
</dbReference>
<dbReference type="InterPro" id="IPR017972">
    <property type="entry name" value="Cyt_P450_CS"/>
</dbReference>
<dbReference type="InterPro" id="IPR002401">
    <property type="entry name" value="Cyt_P450_E_grp-I"/>
</dbReference>
<dbReference type="InterPro" id="IPR036396">
    <property type="entry name" value="Cyt_P450_sf"/>
</dbReference>
<dbReference type="PANTHER" id="PTHR47944">
    <property type="entry name" value="CYTOCHROME P450 98A9"/>
    <property type="match status" value="1"/>
</dbReference>
<dbReference type="PANTHER" id="PTHR47944:SF4">
    <property type="entry name" value="OS09G0441700 PROTEIN"/>
    <property type="match status" value="1"/>
</dbReference>
<dbReference type="Pfam" id="PF00067">
    <property type="entry name" value="p450"/>
    <property type="match status" value="1"/>
</dbReference>
<dbReference type="PRINTS" id="PR00463">
    <property type="entry name" value="EP450I"/>
</dbReference>
<dbReference type="PRINTS" id="PR00385">
    <property type="entry name" value="P450"/>
</dbReference>
<dbReference type="SUPFAM" id="SSF48264">
    <property type="entry name" value="Cytochrome P450"/>
    <property type="match status" value="1"/>
</dbReference>
<dbReference type="PROSITE" id="PS00086">
    <property type="entry name" value="CYTOCHROME_P450"/>
    <property type="match status" value="1"/>
</dbReference>
<gene>
    <name type="primary">CYP719A5</name>
</gene>
<protein>
    <recommendedName>
        <fullName>Cheilanthifoline synthase</fullName>
        <shortName>CHS</shortName>
        <ecNumber evidence="3">1.14.19.65</ecNumber>
    </recommendedName>
    <alternativeName>
        <fullName>Cytochrome P450 719A5</fullName>
    </alternativeName>
</protein>
<feature type="chain" id="PRO_0000418921" description="Cheilanthifoline synthase">
    <location>
        <begin position="1"/>
        <end position="490"/>
    </location>
</feature>
<feature type="transmembrane region" description="Helical" evidence="2">
    <location>
        <begin position="2"/>
        <end position="22"/>
    </location>
</feature>
<feature type="binding site" description="axial binding residue" evidence="1">
    <location>
        <position position="432"/>
    </location>
    <ligand>
        <name>heme</name>
        <dbReference type="ChEBI" id="CHEBI:30413"/>
    </ligand>
    <ligandPart>
        <name>Fe</name>
        <dbReference type="ChEBI" id="CHEBI:18248"/>
    </ligandPart>
</feature>
<proteinExistence type="evidence at protein level"/>
<name>C7195_ESCCA</name>
<sequence>MEESLWVVTATVVVVFAIAKLLKKSSSISTMEWPKGPKKLPIIGNLHQLGGEAFHVVLANLAKIHGTVMTIWVGAWRPMIVISDIDKAWEVLVNKSSDYAGRDFPEITKIISANWKNISCSDSGPFWQNLRKGLQGGALAPLNVISQYQLQERDMKNLITSMQEKASKNNGILKPLDYLKEETIRLLSRLIFGQSFNDENFVKGVHLALDDLVRISGYASLADAFKFCENLPSHKKSIREVHEVNERVVNLVKPYLVKNPPTNTYLYFLNSQKFSDEVIISAVLEVYDLGVDSTASTAVWALTFLVREPRVQEKLYKEIIDLTGGERSVKVEDVSKLPYLQAVMKETMRMKPIAPMAIPHKTSRDTSLMGKKVNKGTSIMVNLYAIHHNPKVFPEPYKFIPERFLQGQESKYGDIKEMEQSLLPFSAGMRICAGMELGKLQYGFSLASLVEAFKWTCAVDGKLPDLSEDHCFILLMKNPLEARITPRTQL</sequence>
<evidence type="ECO:0000250" key="1"/>
<evidence type="ECO:0000255" key="2"/>
<evidence type="ECO:0000269" key="3">
    <source>
    </source>
</evidence>
<evidence type="ECO:0000305" key="4"/>
<comment type="function">
    <text evidence="3">Methylenedioxy bridge-forming cytochrome P450 involved in the biosynthesis of isoquinoline alkaloids. Converts (S)-scoulerine into (R,S)-cheilanthifoline. Catalyzes an oxidative reaction that does not incorporate oxygen into the product.</text>
</comment>
<comment type="catalytic activity">
    <reaction evidence="3">
        <text>(S)-scoulerine + reduced [NADPH--hemoprotein reductase] + O2 = (S)-cheilanthifoline + oxidized [NADPH--hemoprotein reductase] + 2 H2O + H(+)</text>
        <dbReference type="Rhea" id="RHEA:20485"/>
        <dbReference type="Rhea" id="RHEA-COMP:11964"/>
        <dbReference type="Rhea" id="RHEA-COMP:11965"/>
        <dbReference type="ChEBI" id="CHEBI:15377"/>
        <dbReference type="ChEBI" id="CHEBI:15378"/>
        <dbReference type="ChEBI" id="CHEBI:15379"/>
        <dbReference type="ChEBI" id="CHEBI:16233"/>
        <dbReference type="ChEBI" id="CHEBI:17129"/>
        <dbReference type="ChEBI" id="CHEBI:57618"/>
        <dbReference type="ChEBI" id="CHEBI:58210"/>
        <dbReference type="EC" id="1.14.19.65"/>
    </reaction>
</comment>
<comment type="cofactor">
    <cofactor evidence="1">
        <name>heme</name>
        <dbReference type="ChEBI" id="CHEBI:30413"/>
    </cofactor>
</comment>
<comment type="pathway">
    <text>Alkaloid biosynthesis.</text>
</comment>
<comment type="subcellular location">
    <subcellularLocation>
        <location evidence="4">Endoplasmic reticulum membrane</location>
        <topology evidence="4">Single-pass membrane protein</topology>
    </subcellularLocation>
</comment>
<comment type="tissue specificity">
    <text evidence="3">Expressed in roots. Detected in leaves and stems.</text>
</comment>
<comment type="induction">
    <text evidence="3">Up-regulated by methyl jasmonate treatment.</text>
</comment>
<comment type="similarity">
    <text evidence="4">Belongs to the cytochrome P450 family.</text>
</comment>
<reference key="1">
    <citation type="journal article" date="2009" name="Plant Cell Rep.">
        <title>CYP719A subfamily of cytochrome P450 oxygenases and isoquinoline alkaloid biosynthesis in Eschscholzia californica.</title>
        <authorList>
            <person name="Ikezawa N."/>
            <person name="Iwasa K."/>
            <person name="Sato F."/>
        </authorList>
    </citation>
    <scope>NUCLEOTIDE SEQUENCE [MRNA]</scope>
    <scope>TISSUE SPECIFICITY</scope>
    <scope>INDUCTION BY METHYL JASMONATE</scope>
    <scope>CATALYTIC ACTIVITY</scope>
    <scope>FUNCTION</scope>
</reference>
<organism>
    <name type="scientific">Eschscholzia californica</name>
    <name type="common">California poppy</name>
    <dbReference type="NCBI Taxonomy" id="3467"/>
    <lineage>
        <taxon>Eukaryota</taxon>
        <taxon>Viridiplantae</taxon>
        <taxon>Streptophyta</taxon>
        <taxon>Embryophyta</taxon>
        <taxon>Tracheophyta</taxon>
        <taxon>Spermatophyta</taxon>
        <taxon>Magnoliopsida</taxon>
        <taxon>Ranunculales</taxon>
        <taxon>Papaveraceae</taxon>
        <taxon>Papaveroideae</taxon>
        <taxon>Eschscholzia</taxon>
    </lineage>
</organism>
<accession>B5UAQ8</accession>
<keyword id="KW-0256">Endoplasmic reticulum</keyword>
<keyword id="KW-0349">Heme</keyword>
<keyword id="KW-0408">Iron</keyword>
<keyword id="KW-0472">Membrane</keyword>
<keyword id="KW-0479">Metal-binding</keyword>
<keyword id="KW-0503">Monooxygenase</keyword>
<keyword id="KW-0560">Oxidoreductase</keyword>
<keyword id="KW-0812">Transmembrane</keyword>
<keyword id="KW-1133">Transmembrane helix</keyword>